<comment type="subcellular location">
    <subcellularLocation>
        <location evidence="3">Membrane</location>
        <topology evidence="3">Single-pass type I membrane protein</topology>
    </subcellularLocation>
</comment>
<keyword id="KW-0325">Glycoprotein</keyword>
<keyword id="KW-0472">Membrane</keyword>
<keyword id="KW-1185">Reference proteome</keyword>
<keyword id="KW-0732">Signal</keyword>
<keyword id="KW-0812">Transmembrane</keyword>
<keyword id="KW-1133">Transmembrane helix</keyword>
<evidence type="ECO:0000255" key="1"/>
<evidence type="ECO:0000256" key="2">
    <source>
        <dbReference type="SAM" id="MobiDB-lite"/>
    </source>
</evidence>
<evidence type="ECO:0000305" key="3"/>
<accession>Q54F97</accession>
<protein>
    <recommendedName>
        <fullName>Putative uncharacterized transmembrane protein DDB_G0290991</fullName>
    </recommendedName>
</protein>
<feature type="signal peptide" evidence="1">
    <location>
        <begin position="1"/>
        <end position="27"/>
    </location>
</feature>
<feature type="chain" id="PRO_0000346896" description="Putative uncharacterized transmembrane protein DDB_G0290991">
    <location>
        <begin position="28"/>
        <end position="455"/>
    </location>
</feature>
<feature type="topological domain" description="Extracellular" evidence="1">
    <location>
        <begin position="29"/>
        <end position="434"/>
    </location>
</feature>
<feature type="transmembrane region" description="Helical" evidence="1">
    <location>
        <begin position="435"/>
        <end position="455"/>
    </location>
</feature>
<feature type="region of interest" description="Disordered" evidence="2">
    <location>
        <begin position="383"/>
        <end position="402"/>
    </location>
</feature>
<feature type="glycosylation site" description="N-linked (GlcNAc...) asparagine" evidence="1">
    <location>
        <position position="136"/>
    </location>
</feature>
<feature type="glycosylation site" description="N-linked (GlcNAc...) asparagine" evidence="1">
    <location>
        <position position="148"/>
    </location>
</feature>
<feature type="glycosylation site" description="N-linked (GlcNAc...) asparagine" evidence="1">
    <location>
        <position position="210"/>
    </location>
</feature>
<feature type="glycosylation site" description="N-linked (GlcNAc...) asparagine" evidence="1">
    <location>
        <position position="298"/>
    </location>
</feature>
<feature type="glycosylation site" description="N-linked (GlcNAc...) asparagine" evidence="1">
    <location>
        <position position="421"/>
    </location>
</feature>
<feature type="glycosylation site" description="N-linked (GlcNAc...) asparagine" evidence="1">
    <location>
        <position position="432"/>
    </location>
</feature>
<proteinExistence type="inferred from homology"/>
<name>Y9198_DICDI</name>
<reference key="1">
    <citation type="journal article" date="2005" name="Nature">
        <title>The genome of the social amoeba Dictyostelium discoideum.</title>
        <authorList>
            <person name="Eichinger L."/>
            <person name="Pachebat J.A."/>
            <person name="Gloeckner G."/>
            <person name="Rajandream M.A."/>
            <person name="Sucgang R."/>
            <person name="Berriman M."/>
            <person name="Song J."/>
            <person name="Olsen R."/>
            <person name="Szafranski K."/>
            <person name="Xu Q."/>
            <person name="Tunggal B."/>
            <person name="Kummerfeld S."/>
            <person name="Madera M."/>
            <person name="Konfortov B.A."/>
            <person name="Rivero F."/>
            <person name="Bankier A.T."/>
            <person name="Lehmann R."/>
            <person name="Hamlin N."/>
            <person name="Davies R."/>
            <person name="Gaudet P."/>
            <person name="Fey P."/>
            <person name="Pilcher K."/>
            <person name="Chen G."/>
            <person name="Saunders D."/>
            <person name="Sodergren E.J."/>
            <person name="Davis P."/>
            <person name="Kerhornou A."/>
            <person name="Nie X."/>
            <person name="Hall N."/>
            <person name="Anjard C."/>
            <person name="Hemphill L."/>
            <person name="Bason N."/>
            <person name="Farbrother P."/>
            <person name="Desany B."/>
            <person name="Just E."/>
            <person name="Morio T."/>
            <person name="Rost R."/>
            <person name="Churcher C.M."/>
            <person name="Cooper J."/>
            <person name="Haydock S."/>
            <person name="van Driessche N."/>
            <person name="Cronin A."/>
            <person name="Goodhead I."/>
            <person name="Muzny D.M."/>
            <person name="Mourier T."/>
            <person name="Pain A."/>
            <person name="Lu M."/>
            <person name="Harper D."/>
            <person name="Lindsay R."/>
            <person name="Hauser H."/>
            <person name="James K.D."/>
            <person name="Quiles M."/>
            <person name="Madan Babu M."/>
            <person name="Saito T."/>
            <person name="Buchrieser C."/>
            <person name="Wardroper A."/>
            <person name="Felder M."/>
            <person name="Thangavelu M."/>
            <person name="Johnson D."/>
            <person name="Knights A."/>
            <person name="Loulseged H."/>
            <person name="Mungall K.L."/>
            <person name="Oliver K."/>
            <person name="Price C."/>
            <person name="Quail M.A."/>
            <person name="Urushihara H."/>
            <person name="Hernandez J."/>
            <person name="Rabbinowitsch E."/>
            <person name="Steffen D."/>
            <person name="Sanders M."/>
            <person name="Ma J."/>
            <person name="Kohara Y."/>
            <person name="Sharp S."/>
            <person name="Simmonds M.N."/>
            <person name="Spiegler S."/>
            <person name="Tivey A."/>
            <person name="Sugano S."/>
            <person name="White B."/>
            <person name="Walker D."/>
            <person name="Woodward J.R."/>
            <person name="Winckler T."/>
            <person name="Tanaka Y."/>
            <person name="Shaulsky G."/>
            <person name="Schleicher M."/>
            <person name="Weinstock G.M."/>
            <person name="Rosenthal A."/>
            <person name="Cox E.C."/>
            <person name="Chisholm R.L."/>
            <person name="Gibbs R.A."/>
            <person name="Loomis W.F."/>
            <person name="Platzer M."/>
            <person name="Kay R.R."/>
            <person name="Williams J.G."/>
            <person name="Dear P.H."/>
            <person name="Noegel A.A."/>
            <person name="Barrell B.G."/>
            <person name="Kuspa A."/>
        </authorList>
    </citation>
    <scope>NUCLEOTIDE SEQUENCE [LARGE SCALE GENOMIC DNA]</scope>
    <source>
        <strain>AX4</strain>
    </source>
</reference>
<dbReference type="EMBL" id="AAFI02000174">
    <property type="protein sequence ID" value="EAL61926.1"/>
    <property type="molecule type" value="Genomic_DNA"/>
</dbReference>
<dbReference type="RefSeq" id="XP_635440.1">
    <property type="nucleotide sequence ID" value="XM_630348.1"/>
</dbReference>
<dbReference type="GlyGen" id="Q54F97">
    <property type="glycosylation" value="6 sites"/>
</dbReference>
<dbReference type="PaxDb" id="44689-DDB0189198"/>
<dbReference type="EnsemblProtists" id="EAL61926">
    <property type="protein sequence ID" value="EAL61926"/>
    <property type="gene ID" value="DDB_G0290991"/>
</dbReference>
<dbReference type="GeneID" id="8627940"/>
<dbReference type="KEGG" id="ddi:DDB_G0290991"/>
<dbReference type="dictyBase" id="DDB_G0290991"/>
<dbReference type="VEuPathDB" id="AmoebaDB:DDB_G0290991"/>
<dbReference type="HOGENOM" id="CLU_601920_0_0_1"/>
<dbReference type="InParanoid" id="Q54F97"/>
<dbReference type="PRO" id="PR:Q54F97"/>
<dbReference type="Proteomes" id="UP000002195">
    <property type="component" value="Chromosome 5"/>
</dbReference>
<dbReference type="GO" id="GO:0016020">
    <property type="term" value="C:membrane"/>
    <property type="evidence" value="ECO:0007669"/>
    <property type="project" value="UniProtKB-SubCell"/>
</dbReference>
<gene>
    <name type="ORF">DDB_G0290991</name>
</gene>
<sequence length="455" mass="51080">MSQRQQFQFLLSFLILIFLKFIIQIRCDESNGVIIIKNIEDGGSGSGTVSYCQMEQIRDEYITIKTNYGIVSSIGSTTASGSVDGKKEFSLIFNQLIPSDIGYEYFFLRWGTNKQTIATLTDPFLNPYRFNIVHLNRTDLYSIQPTTNNSYLVENLNSISKQVTFNSLIFVNRKSPFFFIFSNFNKVCDNKNNFNMEILYPNNNNNDDFNNSNNNNVDNSNFCSSIQYGNQLVTIKSMSSGNYISSEGSTNAWDIGNKFIKTIPLSSELTDSNYFKIITFENNKIGFLDKFKSFWSWNNTNVEVSSTMLKNQKFNLEPVLNNPSCSKNCYYIKTGNSGYIKEYITKNSVNGNLLNSGSSDDKTMFLIKLLPICSKDINNYGTSSSTTSTTSSSSSSSSSTTTATTMATTTTSKITTTSNINDSFGDDENLINSSSVIKFSTPIIMIIIILINIKF</sequence>
<organism>
    <name type="scientific">Dictyostelium discoideum</name>
    <name type="common">Social amoeba</name>
    <dbReference type="NCBI Taxonomy" id="44689"/>
    <lineage>
        <taxon>Eukaryota</taxon>
        <taxon>Amoebozoa</taxon>
        <taxon>Evosea</taxon>
        <taxon>Eumycetozoa</taxon>
        <taxon>Dictyostelia</taxon>
        <taxon>Dictyosteliales</taxon>
        <taxon>Dictyosteliaceae</taxon>
        <taxon>Dictyostelium</taxon>
    </lineage>
</organism>